<proteinExistence type="inferred from homology"/>
<evidence type="ECO:0000255" key="1">
    <source>
        <dbReference type="HAMAP-Rule" id="MF_01621"/>
    </source>
</evidence>
<gene>
    <name evidence="1" type="primary">fadB</name>
    <name type="ordered locus">Shew185_0016</name>
</gene>
<sequence length="716" mass="76705">MIYQSPTIQVELLEDNIAKLCFNAPGSVNKFDRETLASLDAALDSIKQDSNIKALVLTSSKDTFIVGADITEFLGLFAQDDAVLLSWVEQANAVFNKLEDLPFPTASAIKGFALGGGCETILATDFRIADTTAKIGLPETKLGIIPGFGGTVRLPRVIGADNALEWITTGKDQRAEDALKVGAVDSVVAPQALEAAAIQMLKDAVAEKLDWQARRNRKLSALTLPKLEAMMSFTTAKGMVFAVAGKHYPAPMAAVSVIEQASTKGRAEALQIEHQAFIKLAKTDVAKALIGIFLNDQFVKGKAKKAGKLAKEVNNAAVLGAGIMGGGIAYQSASKGTPIVMKDIAQPALDLGLNEAAKLLSAQVARGRSTPEKMAKVLNNITPSLDYAAIKHSDVVVEAVVEHPKIKAQVLAEVEGYVSEDAIIASNTSTISINLLAKSMKKPERFCGMHFFNPVHKMPLVEVIRGEHSSEETIASVVAYASKMGKTPIVVNDCPGFFVNRVLFPYFAGFNGLLAEGGDFAAIDKVMEKQFGWPMGPAYLLDVVGLDTGHHAQAVMAEGFPDRMGKSGTDAIDVMFENKRLGQKNGKGFYVYSVDSRGKPKKDVDPTSYGLLKDAFGELKAFEADDIIARTMIPMIIETVRCLEEGIVASPAEADMGLVYGLGFPPFRGGVFRYLDTMGVANFVALADKYAHLGGLYQVTDAMRTLAANNGSYYQA</sequence>
<reference key="1">
    <citation type="submission" date="2007-07" db="EMBL/GenBank/DDBJ databases">
        <title>Complete sequence of chromosome of Shewanella baltica OS185.</title>
        <authorList>
            <consortium name="US DOE Joint Genome Institute"/>
            <person name="Copeland A."/>
            <person name="Lucas S."/>
            <person name="Lapidus A."/>
            <person name="Barry K."/>
            <person name="Glavina del Rio T."/>
            <person name="Dalin E."/>
            <person name="Tice H."/>
            <person name="Pitluck S."/>
            <person name="Sims D."/>
            <person name="Brettin T."/>
            <person name="Bruce D."/>
            <person name="Detter J.C."/>
            <person name="Han C."/>
            <person name="Schmutz J."/>
            <person name="Larimer F."/>
            <person name="Land M."/>
            <person name="Hauser L."/>
            <person name="Kyrpides N."/>
            <person name="Mikhailova N."/>
            <person name="Brettar I."/>
            <person name="Rodrigues J."/>
            <person name="Konstantinidis K."/>
            <person name="Tiedje J."/>
            <person name="Richardson P."/>
        </authorList>
    </citation>
    <scope>NUCLEOTIDE SEQUENCE [LARGE SCALE GENOMIC DNA]</scope>
    <source>
        <strain>OS185</strain>
    </source>
</reference>
<dbReference type="EC" id="4.2.1.17" evidence="1"/>
<dbReference type="EC" id="5.1.2.3" evidence="1"/>
<dbReference type="EC" id="5.3.3.8" evidence="1"/>
<dbReference type="EC" id="1.1.1.35" evidence="1"/>
<dbReference type="EMBL" id="CP000753">
    <property type="protein sequence ID" value="ABS06189.1"/>
    <property type="molecule type" value="Genomic_DNA"/>
</dbReference>
<dbReference type="RefSeq" id="WP_011981994.1">
    <property type="nucleotide sequence ID" value="NC_009665.1"/>
</dbReference>
<dbReference type="SMR" id="A6WHA0"/>
<dbReference type="KEGG" id="sbm:Shew185_0016"/>
<dbReference type="HOGENOM" id="CLU_009834_16_3_6"/>
<dbReference type="UniPathway" id="UPA00659"/>
<dbReference type="GO" id="GO:0036125">
    <property type="term" value="C:fatty acid beta-oxidation multienzyme complex"/>
    <property type="evidence" value="ECO:0007669"/>
    <property type="project" value="InterPro"/>
</dbReference>
<dbReference type="GO" id="GO:0008692">
    <property type="term" value="F:3-hydroxybutyryl-CoA epimerase activity"/>
    <property type="evidence" value="ECO:0007669"/>
    <property type="project" value="UniProtKB-UniRule"/>
</dbReference>
<dbReference type="GO" id="GO:0004165">
    <property type="term" value="F:delta(3)-delta(2)-enoyl-CoA isomerase activity"/>
    <property type="evidence" value="ECO:0007669"/>
    <property type="project" value="UniProtKB-UniRule"/>
</dbReference>
<dbReference type="GO" id="GO:0004300">
    <property type="term" value="F:enoyl-CoA hydratase activity"/>
    <property type="evidence" value="ECO:0007669"/>
    <property type="project" value="UniProtKB-UniRule"/>
</dbReference>
<dbReference type="GO" id="GO:0016509">
    <property type="term" value="F:long-chain-3-hydroxyacyl-CoA dehydrogenase activity"/>
    <property type="evidence" value="ECO:0007669"/>
    <property type="project" value="TreeGrafter"/>
</dbReference>
<dbReference type="GO" id="GO:0070403">
    <property type="term" value="F:NAD+ binding"/>
    <property type="evidence" value="ECO:0007669"/>
    <property type="project" value="InterPro"/>
</dbReference>
<dbReference type="GO" id="GO:0006635">
    <property type="term" value="P:fatty acid beta-oxidation"/>
    <property type="evidence" value="ECO:0007669"/>
    <property type="project" value="UniProtKB-UniRule"/>
</dbReference>
<dbReference type="CDD" id="cd06558">
    <property type="entry name" value="crotonase-like"/>
    <property type="match status" value="1"/>
</dbReference>
<dbReference type="FunFam" id="1.10.1040.50:FF:000001">
    <property type="entry name" value="Fatty acid oxidation complex subunit alpha"/>
    <property type="match status" value="1"/>
</dbReference>
<dbReference type="FunFam" id="3.40.50.720:FF:000009">
    <property type="entry name" value="Fatty oxidation complex, alpha subunit"/>
    <property type="match status" value="1"/>
</dbReference>
<dbReference type="Gene3D" id="1.10.1040.50">
    <property type="match status" value="1"/>
</dbReference>
<dbReference type="Gene3D" id="3.90.226.10">
    <property type="entry name" value="2-enoyl-CoA Hydratase, Chain A, domain 1"/>
    <property type="match status" value="1"/>
</dbReference>
<dbReference type="Gene3D" id="3.40.50.720">
    <property type="entry name" value="NAD(P)-binding Rossmann-like Domain"/>
    <property type="match status" value="1"/>
</dbReference>
<dbReference type="HAMAP" id="MF_01621">
    <property type="entry name" value="FadB"/>
    <property type="match status" value="1"/>
</dbReference>
<dbReference type="InterPro" id="IPR006180">
    <property type="entry name" value="3-OHacyl-CoA_DH_CS"/>
</dbReference>
<dbReference type="InterPro" id="IPR006176">
    <property type="entry name" value="3-OHacyl-CoA_DH_NAD-bd"/>
</dbReference>
<dbReference type="InterPro" id="IPR006108">
    <property type="entry name" value="3HC_DH_C"/>
</dbReference>
<dbReference type="InterPro" id="IPR008927">
    <property type="entry name" value="6-PGluconate_DH-like_C_sf"/>
</dbReference>
<dbReference type="InterPro" id="IPR029045">
    <property type="entry name" value="ClpP/crotonase-like_dom_sf"/>
</dbReference>
<dbReference type="InterPro" id="IPR001753">
    <property type="entry name" value="Enoyl-CoA_hydra/iso"/>
</dbReference>
<dbReference type="InterPro" id="IPR050136">
    <property type="entry name" value="FA_oxidation_alpha_subunit"/>
</dbReference>
<dbReference type="InterPro" id="IPR012799">
    <property type="entry name" value="FadB"/>
</dbReference>
<dbReference type="InterPro" id="IPR036291">
    <property type="entry name" value="NAD(P)-bd_dom_sf"/>
</dbReference>
<dbReference type="NCBIfam" id="TIGR02437">
    <property type="entry name" value="FadB"/>
    <property type="match status" value="1"/>
</dbReference>
<dbReference type="NCBIfam" id="NF008727">
    <property type="entry name" value="PRK11730.1"/>
    <property type="match status" value="1"/>
</dbReference>
<dbReference type="PANTHER" id="PTHR43612">
    <property type="entry name" value="TRIFUNCTIONAL ENZYME SUBUNIT ALPHA"/>
    <property type="match status" value="1"/>
</dbReference>
<dbReference type="PANTHER" id="PTHR43612:SF3">
    <property type="entry name" value="TRIFUNCTIONAL ENZYME SUBUNIT ALPHA, MITOCHONDRIAL"/>
    <property type="match status" value="1"/>
</dbReference>
<dbReference type="Pfam" id="PF00725">
    <property type="entry name" value="3HCDH"/>
    <property type="match status" value="1"/>
</dbReference>
<dbReference type="Pfam" id="PF02737">
    <property type="entry name" value="3HCDH_N"/>
    <property type="match status" value="1"/>
</dbReference>
<dbReference type="Pfam" id="PF00378">
    <property type="entry name" value="ECH_1"/>
    <property type="match status" value="1"/>
</dbReference>
<dbReference type="SUPFAM" id="SSF48179">
    <property type="entry name" value="6-phosphogluconate dehydrogenase C-terminal domain-like"/>
    <property type="match status" value="2"/>
</dbReference>
<dbReference type="SUPFAM" id="SSF52096">
    <property type="entry name" value="ClpP/crotonase"/>
    <property type="match status" value="1"/>
</dbReference>
<dbReference type="SUPFAM" id="SSF51735">
    <property type="entry name" value="NAD(P)-binding Rossmann-fold domains"/>
    <property type="match status" value="1"/>
</dbReference>
<dbReference type="PROSITE" id="PS00067">
    <property type="entry name" value="3HCDH"/>
    <property type="match status" value="1"/>
</dbReference>
<accession>A6WHA0</accession>
<keyword id="KW-0276">Fatty acid metabolism</keyword>
<keyword id="KW-0413">Isomerase</keyword>
<keyword id="KW-0442">Lipid degradation</keyword>
<keyword id="KW-0443">Lipid metabolism</keyword>
<keyword id="KW-0456">Lyase</keyword>
<keyword id="KW-0511">Multifunctional enzyme</keyword>
<keyword id="KW-0520">NAD</keyword>
<keyword id="KW-0560">Oxidoreductase</keyword>
<name>FADB_SHEB8</name>
<feature type="chain" id="PRO_1000069574" description="Fatty acid oxidation complex subunit alpha">
    <location>
        <begin position="1"/>
        <end position="716"/>
    </location>
</feature>
<feature type="region of interest" description="Enoyl-CoA hydratase/isomerase" evidence="1">
    <location>
        <begin position="1"/>
        <end position="189"/>
    </location>
</feature>
<feature type="region of interest" description="3-hydroxyacyl-CoA dehydrogenase" evidence="1">
    <location>
        <begin position="311"/>
        <end position="716"/>
    </location>
</feature>
<feature type="active site" description="For 3-hydroxyacyl-CoA dehydrogenase activity" evidence="1">
    <location>
        <position position="450"/>
    </location>
</feature>
<feature type="binding site" evidence="1">
    <location>
        <position position="296"/>
    </location>
    <ligand>
        <name>substrate</name>
    </ligand>
</feature>
<feature type="binding site" evidence="1">
    <location>
        <position position="324"/>
    </location>
    <ligand>
        <name>NAD(+)</name>
        <dbReference type="ChEBI" id="CHEBI:57540"/>
    </ligand>
</feature>
<feature type="binding site" evidence="1">
    <location>
        <position position="343"/>
    </location>
    <ligand>
        <name>NAD(+)</name>
        <dbReference type="ChEBI" id="CHEBI:57540"/>
    </ligand>
</feature>
<feature type="binding site" evidence="1">
    <location>
        <begin position="400"/>
        <end position="402"/>
    </location>
    <ligand>
        <name>NAD(+)</name>
        <dbReference type="ChEBI" id="CHEBI:57540"/>
    </ligand>
</feature>
<feature type="binding site" evidence="1">
    <location>
        <position position="407"/>
    </location>
    <ligand>
        <name>NAD(+)</name>
        <dbReference type="ChEBI" id="CHEBI:57540"/>
    </ligand>
</feature>
<feature type="binding site" evidence="1">
    <location>
        <position position="429"/>
    </location>
    <ligand>
        <name>NAD(+)</name>
        <dbReference type="ChEBI" id="CHEBI:57540"/>
    </ligand>
</feature>
<feature type="binding site" evidence="1">
    <location>
        <position position="453"/>
    </location>
    <ligand>
        <name>NAD(+)</name>
        <dbReference type="ChEBI" id="CHEBI:57540"/>
    </ligand>
</feature>
<feature type="binding site" evidence="1">
    <location>
        <position position="500"/>
    </location>
    <ligand>
        <name>substrate</name>
    </ligand>
</feature>
<feature type="binding site" evidence="1">
    <location>
        <position position="660"/>
    </location>
    <ligand>
        <name>substrate</name>
    </ligand>
</feature>
<feature type="site" description="Important for catalytic activity" evidence="1">
    <location>
        <position position="119"/>
    </location>
</feature>
<feature type="site" description="Important for catalytic activity" evidence="1">
    <location>
        <position position="139"/>
    </location>
</feature>
<organism>
    <name type="scientific">Shewanella baltica (strain OS185)</name>
    <dbReference type="NCBI Taxonomy" id="402882"/>
    <lineage>
        <taxon>Bacteria</taxon>
        <taxon>Pseudomonadati</taxon>
        <taxon>Pseudomonadota</taxon>
        <taxon>Gammaproteobacteria</taxon>
        <taxon>Alteromonadales</taxon>
        <taxon>Shewanellaceae</taxon>
        <taxon>Shewanella</taxon>
    </lineage>
</organism>
<comment type="function">
    <text evidence="1">Involved in the aerobic and anaerobic degradation of long-chain fatty acids via beta-oxidation cycle. Catalyzes the formation of 3-oxoacyl-CoA from enoyl-CoA via L-3-hydroxyacyl-CoA. It can also use D-3-hydroxyacyl-CoA and cis-3-enoyl-CoA as substrate.</text>
</comment>
<comment type="catalytic activity">
    <reaction evidence="1">
        <text>a (3S)-3-hydroxyacyl-CoA + NAD(+) = a 3-oxoacyl-CoA + NADH + H(+)</text>
        <dbReference type="Rhea" id="RHEA:22432"/>
        <dbReference type="ChEBI" id="CHEBI:15378"/>
        <dbReference type="ChEBI" id="CHEBI:57318"/>
        <dbReference type="ChEBI" id="CHEBI:57540"/>
        <dbReference type="ChEBI" id="CHEBI:57945"/>
        <dbReference type="ChEBI" id="CHEBI:90726"/>
        <dbReference type="EC" id="1.1.1.35"/>
    </reaction>
</comment>
<comment type="catalytic activity">
    <reaction evidence="1">
        <text>a (3S)-3-hydroxyacyl-CoA = a (2E)-enoyl-CoA + H2O</text>
        <dbReference type="Rhea" id="RHEA:16105"/>
        <dbReference type="ChEBI" id="CHEBI:15377"/>
        <dbReference type="ChEBI" id="CHEBI:57318"/>
        <dbReference type="ChEBI" id="CHEBI:58856"/>
        <dbReference type="EC" id="4.2.1.17"/>
    </reaction>
</comment>
<comment type="catalytic activity">
    <reaction evidence="1">
        <text>a 4-saturated-(3S)-3-hydroxyacyl-CoA = a (3E)-enoyl-CoA + H2O</text>
        <dbReference type="Rhea" id="RHEA:20724"/>
        <dbReference type="ChEBI" id="CHEBI:15377"/>
        <dbReference type="ChEBI" id="CHEBI:58521"/>
        <dbReference type="ChEBI" id="CHEBI:137480"/>
        <dbReference type="EC" id="4.2.1.17"/>
    </reaction>
</comment>
<comment type="catalytic activity">
    <reaction evidence="1">
        <text>(3S)-3-hydroxybutanoyl-CoA = (3R)-3-hydroxybutanoyl-CoA</text>
        <dbReference type="Rhea" id="RHEA:21760"/>
        <dbReference type="ChEBI" id="CHEBI:57315"/>
        <dbReference type="ChEBI" id="CHEBI:57316"/>
        <dbReference type="EC" id="5.1.2.3"/>
    </reaction>
</comment>
<comment type="catalytic activity">
    <reaction evidence="1">
        <text>a (3Z)-enoyl-CoA = a 4-saturated (2E)-enoyl-CoA</text>
        <dbReference type="Rhea" id="RHEA:45900"/>
        <dbReference type="ChEBI" id="CHEBI:85097"/>
        <dbReference type="ChEBI" id="CHEBI:85489"/>
        <dbReference type="EC" id="5.3.3.8"/>
    </reaction>
</comment>
<comment type="catalytic activity">
    <reaction evidence="1">
        <text>a (3E)-enoyl-CoA = a 4-saturated (2E)-enoyl-CoA</text>
        <dbReference type="Rhea" id="RHEA:45228"/>
        <dbReference type="ChEBI" id="CHEBI:58521"/>
        <dbReference type="ChEBI" id="CHEBI:85097"/>
        <dbReference type="EC" id="5.3.3.8"/>
    </reaction>
</comment>
<comment type="pathway">
    <text evidence="1">Lipid metabolism; fatty acid beta-oxidation.</text>
</comment>
<comment type="subunit">
    <text evidence="1">Heterotetramer of two alpha chains (FadB) and two beta chains (FadA).</text>
</comment>
<comment type="similarity">
    <text evidence="1">In the N-terminal section; belongs to the enoyl-CoA hydratase/isomerase family.</text>
</comment>
<comment type="similarity">
    <text evidence="1">In the C-terminal section; belongs to the 3-hydroxyacyl-CoA dehydrogenase family.</text>
</comment>
<protein>
    <recommendedName>
        <fullName evidence="1">Fatty acid oxidation complex subunit alpha</fullName>
    </recommendedName>
    <domain>
        <recommendedName>
            <fullName evidence="1">Enoyl-CoA hydratase/Delta(3)-cis-Delta(2)-trans-enoyl-CoA isomerase/3-hydroxybutyryl-CoA epimerase</fullName>
            <ecNumber evidence="1">4.2.1.17</ecNumber>
            <ecNumber evidence="1">5.1.2.3</ecNumber>
            <ecNumber evidence="1">5.3.3.8</ecNumber>
        </recommendedName>
    </domain>
    <domain>
        <recommendedName>
            <fullName evidence="1">3-hydroxyacyl-CoA dehydrogenase</fullName>
            <ecNumber evidence="1">1.1.1.35</ecNumber>
        </recommendedName>
    </domain>
</protein>